<organism>
    <name type="scientific">Escherichia coli O45:K1 (strain S88 / ExPEC)</name>
    <dbReference type="NCBI Taxonomy" id="585035"/>
    <lineage>
        <taxon>Bacteria</taxon>
        <taxon>Pseudomonadati</taxon>
        <taxon>Pseudomonadota</taxon>
        <taxon>Gammaproteobacteria</taxon>
        <taxon>Enterobacterales</taxon>
        <taxon>Enterobacteriaceae</taxon>
        <taxon>Escherichia</taxon>
    </lineage>
</organism>
<accession>B7MI95</accession>
<sequence length="257" mass="27028">MNPLIIKLGGVLLDSEEALERLFSALVNYRESHQRPLVIVHGGGCVVDELMKGLNLPVKKKNGLRVTPADQIDIITGALAGTANKTLLAWAKKHQIAAVGLFLGDGDSVKVTQLDEELGHVGLAQPGSPKLINSLLENGYLPVVSSIGVTDEGQLMNVNADQAATALAATLGADLILLSDVSGILDGKGQRIAEMTAAKAEQLIEQGIITDGMIVKVNAALDAARTLGRPVDIASWRHAEQLPALFNGMPMGTRILA</sequence>
<keyword id="KW-0028">Amino-acid biosynthesis</keyword>
<keyword id="KW-0055">Arginine biosynthesis</keyword>
<keyword id="KW-0067">ATP-binding</keyword>
<keyword id="KW-0963">Cytoplasm</keyword>
<keyword id="KW-0418">Kinase</keyword>
<keyword id="KW-0547">Nucleotide-binding</keyword>
<keyword id="KW-1185">Reference proteome</keyword>
<keyword id="KW-0808">Transferase</keyword>
<protein>
    <recommendedName>
        <fullName evidence="1">Acetylglutamate kinase</fullName>
        <ecNumber evidence="1">2.7.2.8</ecNumber>
    </recommendedName>
    <alternativeName>
        <fullName evidence="1">N-acetyl-L-glutamate 5-phosphotransferase</fullName>
    </alternativeName>
    <alternativeName>
        <fullName evidence="1">NAG kinase</fullName>
        <shortName evidence="1">NAGK</shortName>
    </alternativeName>
</protein>
<dbReference type="EC" id="2.7.2.8" evidence="1"/>
<dbReference type="EMBL" id="CU928161">
    <property type="protein sequence ID" value="CAR05593.1"/>
    <property type="molecule type" value="Genomic_DNA"/>
</dbReference>
<dbReference type="SMR" id="B7MI95"/>
<dbReference type="KEGG" id="ecz:ECS88_4414"/>
<dbReference type="HOGENOM" id="CLU_053680_1_1_6"/>
<dbReference type="UniPathway" id="UPA00068">
    <property type="reaction ID" value="UER00107"/>
</dbReference>
<dbReference type="Proteomes" id="UP000000747">
    <property type="component" value="Chromosome"/>
</dbReference>
<dbReference type="GO" id="GO:0005737">
    <property type="term" value="C:cytoplasm"/>
    <property type="evidence" value="ECO:0007669"/>
    <property type="project" value="UniProtKB-SubCell"/>
</dbReference>
<dbReference type="GO" id="GO:0003991">
    <property type="term" value="F:acetylglutamate kinase activity"/>
    <property type="evidence" value="ECO:0007669"/>
    <property type="project" value="UniProtKB-UniRule"/>
</dbReference>
<dbReference type="GO" id="GO:0005524">
    <property type="term" value="F:ATP binding"/>
    <property type="evidence" value="ECO:0007669"/>
    <property type="project" value="UniProtKB-UniRule"/>
</dbReference>
<dbReference type="GO" id="GO:0042450">
    <property type="term" value="P:arginine biosynthetic process via ornithine"/>
    <property type="evidence" value="ECO:0007669"/>
    <property type="project" value="UniProtKB-UniRule"/>
</dbReference>
<dbReference type="GO" id="GO:0006526">
    <property type="term" value="P:L-arginine biosynthetic process"/>
    <property type="evidence" value="ECO:0007669"/>
    <property type="project" value="UniProtKB-UniPathway"/>
</dbReference>
<dbReference type="CDD" id="cd04249">
    <property type="entry name" value="AAK_NAGK-NC"/>
    <property type="match status" value="1"/>
</dbReference>
<dbReference type="FunFam" id="3.40.1160.10:FF:000008">
    <property type="entry name" value="Acetylglutamate kinase"/>
    <property type="match status" value="1"/>
</dbReference>
<dbReference type="Gene3D" id="3.40.1160.10">
    <property type="entry name" value="Acetylglutamate kinase-like"/>
    <property type="match status" value="1"/>
</dbReference>
<dbReference type="HAMAP" id="MF_00082">
    <property type="entry name" value="ArgB"/>
    <property type="match status" value="1"/>
</dbReference>
<dbReference type="InterPro" id="IPR036393">
    <property type="entry name" value="AceGlu_kinase-like_sf"/>
</dbReference>
<dbReference type="InterPro" id="IPR004662">
    <property type="entry name" value="AcgluKinase_fam"/>
</dbReference>
<dbReference type="InterPro" id="IPR037528">
    <property type="entry name" value="ArgB"/>
</dbReference>
<dbReference type="InterPro" id="IPR001048">
    <property type="entry name" value="Asp/Glu/Uridylate_kinase"/>
</dbReference>
<dbReference type="InterPro" id="IPR041731">
    <property type="entry name" value="NAGK-NC"/>
</dbReference>
<dbReference type="NCBIfam" id="TIGR00761">
    <property type="entry name" value="argB"/>
    <property type="match status" value="1"/>
</dbReference>
<dbReference type="PANTHER" id="PTHR23342">
    <property type="entry name" value="N-ACETYLGLUTAMATE SYNTHASE"/>
    <property type="match status" value="1"/>
</dbReference>
<dbReference type="PANTHER" id="PTHR23342:SF0">
    <property type="entry name" value="N-ACETYLGLUTAMATE SYNTHASE, MITOCHONDRIAL"/>
    <property type="match status" value="1"/>
</dbReference>
<dbReference type="Pfam" id="PF00696">
    <property type="entry name" value="AA_kinase"/>
    <property type="match status" value="1"/>
</dbReference>
<dbReference type="PIRSF" id="PIRSF000728">
    <property type="entry name" value="NAGK"/>
    <property type="match status" value="1"/>
</dbReference>
<dbReference type="SUPFAM" id="SSF53633">
    <property type="entry name" value="Carbamate kinase-like"/>
    <property type="match status" value="1"/>
</dbReference>
<feature type="chain" id="PRO_1000117123" description="Acetylglutamate kinase">
    <location>
        <begin position="1"/>
        <end position="257"/>
    </location>
</feature>
<feature type="binding site" evidence="1">
    <location>
        <begin position="43"/>
        <end position="44"/>
    </location>
    <ligand>
        <name>substrate</name>
    </ligand>
</feature>
<feature type="binding site" evidence="1">
    <location>
        <position position="65"/>
    </location>
    <ligand>
        <name>substrate</name>
    </ligand>
</feature>
<feature type="binding site" evidence="1">
    <location>
        <position position="157"/>
    </location>
    <ligand>
        <name>substrate</name>
    </ligand>
</feature>
<feature type="binding site" evidence="1">
    <location>
        <begin position="180"/>
        <end position="185"/>
    </location>
    <ligand>
        <name>ATP</name>
        <dbReference type="ChEBI" id="CHEBI:30616"/>
    </ligand>
</feature>
<feature type="binding site" evidence="1">
    <location>
        <begin position="208"/>
        <end position="210"/>
    </location>
    <ligand>
        <name>ATP</name>
        <dbReference type="ChEBI" id="CHEBI:30616"/>
    </ligand>
</feature>
<feature type="site" description="Transition state stabilizer" evidence="1">
    <location>
        <position position="7"/>
    </location>
</feature>
<feature type="site" description="Transition state stabilizer" evidence="1">
    <location>
        <position position="216"/>
    </location>
</feature>
<proteinExistence type="inferred from homology"/>
<comment type="function">
    <text evidence="1">Catalyzes the ATP-dependent phosphorylation of N-acetyl-L-glutamate.</text>
</comment>
<comment type="catalytic activity">
    <reaction evidence="1">
        <text>N-acetyl-L-glutamate + ATP = N-acetyl-L-glutamyl 5-phosphate + ADP</text>
        <dbReference type="Rhea" id="RHEA:14629"/>
        <dbReference type="ChEBI" id="CHEBI:30616"/>
        <dbReference type="ChEBI" id="CHEBI:44337"/>
        <dbReference type="ChEBI" id="CHEBI:57936"/>
        <dbReference type="ChEBI" id="CHEBI:456216"/>
        <dbReference type="EC" id="2.7.2.8"/>
    </reaction>
</comment>
<comment type="pathway">
    <text evidence="1">Amino-acid biosynthesis; L-arginine biosynthesis; N(2)-acetyl-L-ornithine from L-glutamate: step 2/4.</text>
</comment>
<comment type="subunit">
    <text evidence="1">Homodimer.</text>
</comment>
<comment type="subcellular location">
    <subcellularLocation>
        <location evidence="1">Cytoplasm</location>
    </subcellularLocation>
</comment>
<comment type="similarity">
    <text evidence="1">Belongs to the acetylglutamate kinase family. ArgB subfamily.</text>
</comment>
<gene>
    <name evidence="1" type="primary">argB</name>
    <name type="ordered locus">ECS88_4414</name>
</gene>
<evidence type="ECO:0000255" key="1">
    <source>
        <dbReference type="HAMAP-Rule" id="MF_00082"/>
    </source>
</evidence>
<name>ARGB_ECO45</name>
<reference key="1">
    <citation type="journal article" date="2009" name="PLoS Genet.">
        <title>Organised genome dynamics in the Escherichia coli species results in highly diverse adaptive paths.</title>
        <authorList>
            <person name="Touchon M."/>
            <person name="Hoede C."/>
            <person name="Tenaillon O."/>
            <person name="Barbe V."/>
            <person name="Baeriswyl S."/>
            <person name="Bidet P."/>
            <person name="Bingen E."/>
            <person name="Bonacorsi S."/>
            <person name="Bouchier C."/>
            <person name="Bouvet O."/>
            <person name="Calteau A."/>
            <person name="Chiapello H."/>
            <person name="Clermont O."/>
            <person name="Cruveiller S."/>
            <person name="Danchin A."/>
            <person name="Diard M."/>
            <person name="Dossat C."/>
            <person name="Karoui M.E."/>
            <person name="Frapy E."/>
            <person name="Garry L."/>
            <person name="Ghigo J.M."/>
            <person name="Gilles A.M."/>
            <person name="Johnson J."/>
            <person name="Le Bouguenec C."/>
            <person name="Lescat M."/>
            <person name="Mangenot S."/>
            <person name="Martinez-Jehanne V."/>
            <person name="Matic I."/>
            <person name="Nassif X."/>
            <person name="Oztas S."/>
            <person name="Petit M.A."/>
            <person name="Pichon C."/>
            <person name="Rouy Z."/>
            <person name="Ruf C.S."/>
            <person name="Schneider D."/>
            <person name="Tourret J."/>
            <person name="Vacherie B."/>
            <person name="Vallenet D."/>
            <person name="Medigue C."/>
            <person name="Rocha E.P.C."/>
            <person name="Denamur E."/>
        </authorList>
    </citation>
    <scope>NUCLEOTIDE SEQUENCE [LARGE SCALE GENOMIC DNA]</scope>
    <source>
        <strain>S88 / ExPEC</strain>
    </source>
</reference>